<evidence type="ECO:0000255" key="1">
    <source>
        <dbReference type="HAMAP-Rule" id="MF_00178"/>
    </source>
</evidence>
<keyword id="KW-1185">Reference proteome</keyword>
<keyword id="KW-0686">Riboflavin biosynthesis</keyword>
<keyword id="KW-0808">Transferase</keyword>
<reference key="1">
    <citation type="journal article" date="2002" name="DNA Res.">
        <title>Complete genome structure of the thermophilic cyanobacterium Thermosynechococcus elongatus BP-1.</title>
        <authorList>
            <person name="Nakamura Y."/>
            <person name="Kaneko T."/>
            <person name="Sato S."/>
            <person name="Ikeuchi M."/>
            <person name="Katoh H."/>
            <person name="Sasamoto S."/>
            <person name="Watanabe A."/>
            <person name="Iriguchi M."/>
            <person name="Kawashima K."/>
            <person name="Kimura T."/>
            <person name="Kishida Y."/>
            <person name="Kiyokawa C."/>
            <person name="Kohara M."/>
            <person name="Matsumoto M."/>
            <person name="Matsuno A."/>
            <person name="Nakazaki N."/>
            <person name="Shimpo S."/>
            <person name="Sugimoto M."/>
            <person name="Takeuchi C."/>
            <person name="Yamada M."/>
            <person name="Tabata S."/>
        </authorList>
    </citation>
    <scope>NUCLEOTIDE SEQUENCE [LARGE SCALE GENOMIC DNA]</scope>
    <source>
        <strain>NIES-2133 / IAM M-273 / BP-1</strain>
    </source>
</reference>
<name>RISB_THEVB</name>
<accession>Q8DMP4</accession>
<organism>
    <name type="scientific">Thermosynechococcus vestitus (strain NIES-2133 / IAM M-273 / BP-1)</name>
    <dbReference type="NCBI Taxonomy" id="197221"/>
    <lineage>
        <taxon>Bacteria</taxon>
        <taxon>Bacillati</taxon>
        <taxon>Cyanobacteriota</taxon>
        <taxon>Cyanophyceae</taxon>
        <taxon>Acaryochloridales</taxon>
        <taxon>Thermosynechococcaceae</taxon>
        <taxon>Thermosynechococcus</taxon>
    </lineage>
</organism>
<proteinExistence type="inferred from homology"/>
<feature type="chain" id="PRO_0000134819" description="6,7-dimethyl-8-ribityllumazine synthase">
    <location>
        <begin position="1"/>
        <end position="178"/>
    </location>
</feature>
<feature type="active site" description="Proton donor" evidence="1">
    <location>
        <position position="93"/>
    </location>
</feature>
<feature type="binding site" evidence="1">
    <location>
        <position position="23"/>
    </location>
    <ligand>
        <name>5-amino-6-(D-ribitylamino)uracil</name>
        <dbReference type="ChEBI" id="CHEBI:15934"/>
    </ligand>
</feature>
<feature type="binding site" evidence="1">
    <location>
        <begin position="61"/>
        <end position="63"/>
    </location>
    <ligand>
        <name>5-amino-6-(D-ribitylamino)uracil</name>
        <dbReference type="ChEBI" id="CHEBI:15934"/>
    </ligand>
</feature>
<feature type="binding site" evidence="1">
    <location>
        <begin position="85"/>
        <end position="87"/>
    </location>
    <ligand>
        <name>5-amino-6-(D-ribitylamino)uracil</name>
        <dbReference type="ChEBI" id="CHEBI:15934"/>
    </ligand>
</feature>
<feature type="binding site" evidence="1">
    <location>
        <begin position="90"/>
        <end position="91"/>
    </location>
    <ligand>
        <name>(2S)-2-hydroxy-3-oxobutyl phosphate</name>
        <dbReference type="ChEBI" id="CHEBI:58830"/>
    </ligand>
</feature>
<feature type="binding site" evidence="1">
    <location>
        <position position="118"/>
    </location>
    <ligand>
        <name>5-amino-6-(D-ribitylamino)uracil</name>
        <dbReference type="ChEBI" id="CHEBI:15934"/>
    </ligand>
</feature>
<feature type="binding site" evidence="1">
    <location>
        <position position="132"/>
    </location>
    <ligand>
        <name>(2S)-2-hydroxy-3-oxobutyl phosphate</name>
        <dbReference type="ChEBI" id="CHEBI:58830"/>
    </ligand>
</feature>
<gene>
    <name evidence="1" type="primary">ribH</name>
    <name type="ordered locus">tlr0067</name>
</gene>
<sequence>MAVFEGTYQVLGTPRFGIVISRFNDLITTKLLEGCQDCLRRHGVDPNPHGSQVDYAWVPGSFEIPLVAAQLAATRRYAAIICLGAVIRGQTPHFDYVAAEVTKGIATASMQTGVPIIYGILTTDTMQQALERAGIKSNKGWEYALNALEMANLMQTLPSAINPPTTKLSSSTRILTDG</sequence>
<comment type="function">
    <text evidence="1">Catalyzes the formation of 6,7-dimethyl-8-ribityllumazine by condensation of 5-amino-6-(D-ribitylamino)uracil with 3,4-dihydroxy-2-butanone 4-phosphate. This is the penultimate step in the biosynthesis of riboflavin.</text>
</comment>
<comment type="catalytic activity">
    <reaction evidence="1">
        <text>(2S)-2-hydroxy-3-oxobutyl phosphate + 5-amino-6-(D-ribitylamino)uracil = 6,7-dimethyl-8-(1-D-ribityl)lumazine + phosphate + 2 H2O + H(+)</text>
        <dbReference type="Rhea" id="RHEA:26152"/>
        <dbReference type="ChEBI" id="CHEBI:15377"/>
        <dbReference type="ChEBI" id="CHEBI:15378"/>
        <dbReference type="ChEBI" id="CHEBI:15934"/>
        <dbReference type="ChEBI" id="CHEBI:43474"/>
        <dbReference type="ChEBI" id="CHEBI:58201"/>
        <dbReference type="ChEBI" id="CHEBI:58830"/>
        <dbReference type="EC" id="2.5.1.78"/>
    </reaction>
</comment>
<comment type="pathway">
    <text evidence="1">Cofactor biosynthesis; riboflavin biosynthesis; riboflavin from 2-hydroxy-3-oxobutyl phosphate and 5-amino-6-(D-ribitylamino)uracil: step 1/2.</text>
</comment>
<comment type="similarity">
    <text evidence="1">Belongs to the DMRL synthase family.</text>
</comment>
<dbReference type="EC" id="2.5.1.78" evidence="1"/>
<dbReference type="EMBL" id="BA000039">
    <property type="protein sequence ID" value="BAC07620.1"/>
    <property type="molecule type" value="Genomic_DNA"/>
</dbReference>
<dbReference type="RefSeq" id="NP_680858.1">
    <property type="nucleotide sequence ID" value="NC_004113.1"/>
</dbReference>
<dbReference type="RefSeq" id="WP_011055922.1">
    <property type="nucleotide sequence ID" value="NC_004113.1"/>
</dbReference>
<dbReference type="SMR" id="Q8DMP4"/>
<dbReference type="STRING" id="197221.gene:10746645"/>
<dbReference type="EnsemblBacteria" id="BAC07620">
    <property type="protein sequence ID" value="BAC07620"/>
    <property type="gene ID" value="BAC07620"/>
</dbReference>
<dbReference type="KEGG" id="tel:tlr0067"/>
<dbReference type="PATRIC" id="fig|197221.4.peg.68"/>
<dbReference type="eggNOG" id="COG0054">
    <property type="taxonomic scope" value="Bacteria"/>
</dbReference>
<dbReference type="UniPathway" id="UPA00275">
    <property type="reaction ID" value="UER00404"/>
</dbReference>
<dbReference type="Proteomes" id="UP000000440">
    <property type="component" value="Chromosome"/>
</dbReference>
<dbReference type="GO" id="GO:0005829">
    <property type="term" value="C:cytosol"/>
    <property type="evidence" value="ECO:0007669"/>
    <property type="project" value="TreeGrafter"/>
</dbReference>
<dbReference type="GO" id="GO:0009349">
    <property type="term" value="C:riboflavin synthase complex"/>
    <property type="evidence" value="ECO:0007669"/>
    <property type="project" value="InterPro"/>
</dbReference>
<dbReference type="GO" id="GO:0000906">
    <property type="term" value="F:6,7-dimethyl-8-ribityllumazine synthase activity"/>
    <property type="evidence" value="ECO:0007669"/>
    <property type="project" value="UniProtKB-UniRule"/>
</dbReference>
<dbReference type="GO" id="GO:0009231">
    <property type="term" value="P:riboflavin biosynthetic process"/>
    <property type="evidence" value="ECO:0007669"/>
    <property type="project" value="UniProtKB-UniRule"/>
</dbReference>
<dbReference type="CDD" id="cd09209">
    <property type="entry name" value="Lumazine_synthase-I"/>
    <property type="match status" value="1"/>
</dbReference>
<dbReference type="FunFam" id="3.40.50.960:FF:000001">
    <property type="entry name" value="6,7-dimethyl-8-ribityllumazine synthase"/>
    <property type="match status" value="1"/>
</dbReference>
<dbReference type="Gene3D" id="3.40.50.960">
    <property type="entry name" value="Lumazine/riboflavin synthase"/>
    <property type="match status" value="1"/>
</dbReference>
<dbReference type="HAMAP" id="MF_00178">
    <property type="entry name" value="Lumazine_synth"/>
    <property type="match status" value="1"/>
</dbReference>
<dbReference type="InterPro" id="IPR034964">
    <property type="entry name" value="LS"/>
</dbReference>
<dbReference type="InterPro" id="IPR002180">
    <property type="entry name" value="LS/RS"/>
</dbReference>
<dbReference type="InterPro" id="IPR036467">
    <property type="entry name" value="LS/RS_sf"/>
</dbReference>
<dbReference type="NCBIfam" id="TIGR00114">
    <property type="entry name" value="lumazine-synth"/>
    <property type="match status" value="1"/>
</dbReference>
<dbReference type="PANTHER" id="PTHR21058:SF0">
    <property type="entry name" value="6,7-DIMETHYL-8-RIBITYLLUMAZINE SYNTHASE"/>
    <property type="match status" value="1"/>
</dbReference>
<dbReference type="PANTHER" id="PTHR21058">
    <property type="entry name" value="6,7-DIMETHYL-8-RIBITYLLUMAZINE SYNTHASE DMRL SYNTHASE LUMAZINE SYNTHASE"/>
    <property type="match status" value="1"/>
</dbReference>
<dbReference type="Pfam" id="PF00885">
    <property type="entry name" value="DMRL_synthase"/>
    <property type="match status" value="1"/>
</dbReference>
<dbReference type="SUPFAM" id="SSF52121">
    <property type="entry name" value="Lumazine synthase"/>
    <property type="match status" value="1"/>
</dbReference>
<protein>
    <recommendedName>
        <fullName evidence="1">6,7-dimethyl-8-ribityllumazine synthase</fullName>
        <shortName evidence="1">DMRL synthase</shortName>
        <shortName evidence="1">LS</shortName>
        <shortName evidence="1">Lumazine synthase</shortName>
        <ecNumber evidence="1">2.5.1.78</ecNumber>
    </recommendedName>
</protein>